<gene>
    <name evidence="1" type="primary">rps11</name>
</gene>
<accession>P69656</accession>
<accession>P06365</accession>
<evidence type="ECO:0000255" key="1">
    <source>
        <dbReference type="HAMAP-Rule" id="MF_01310"/>
    </source>
</evidence>
<evidence type="ECO:0000256" key="2">
    <source>
        <dbReference type="SAM" id="MobiDB-lite"/>
    </source>
</evidence>
<evidence type="ECO:0000305" key="3"/>
<sequence length="138" mass="14883">MAKAIPKISSRRNGRIGSRKGARRIPKGVIHVQASFNNTIVTVTDVRGRVVSWSSAGTSGFKGTRRGTPFAAQTAAANAIRTVVDQGMQRAEVMIKGPGLGRDAALRAIRRSGILLTFVRDVTPMPHNGCRPPKKRRV</sequence>
<comment type="subunit">
    <text evidence="1">Part of the 30S ribosomal subunit.</text>
</comment>
<comment type="subcellular location">
    <subcellularLocation>
        <location>Plastid</location>
        <location>Chloroplast</location>
    </subcellularLocation>
</comment>
<comment type="similarity">
    <text evidence="1">Belongs to the universal ribosomal protein uS11 family.</text>
</comment>
<geneLocation type="chloroplast"/>
<feature type="chain" id="PRO_0000123329" description="Small ribosomal subunit protein uS11c">
    <location>
        <begin position="1"/>
        <end position="138"/>
    </location>
</feature>
<feature type="region of interest" description="Disordered" evidence="2">
    <location>
        <begin position="1"/>
        <end position="22"/>
    </location>
</feature>
<feature type="compositionally biased region" description="Basic residues" evidence="2">
    <location>
        <begin position="9"/>
        <end position="22"/>
    </location>
</feature>
<keyword id="KW-0150">Chloroplast</keyword>
<keyword id="KW-0934">Plastid</keyword>
<keyword id="KW-1185">Reference proteome</keyword>
<keyword id="KW-0687">Ribonucleoprotein</keyword>
<keyword id="KW-0689">Ribosomal protein</keyword>
<keyword id="KW-0694">RNA-binding</keyword>
<keyword id="KW-0699">rRNA-binding</keyword>
<proteinExistence type="inferred from homology"/>
<dbReference type="EMBL" id="Z00044">
    <property type="protein sequence ID" value="CAA77377.1"/>
    <property type="molecule type" value="Genomic_DNA"/>
</dbReference>
<dbReference type="PIR" id="A02724">
    <property type="entry name" value="R3NT11"/>
</dbReference>
<dbReference type="RefSeq" id="NP_054533.1">
    <property type="nucleotide sequence ID" value="NC_001879.2"/>
</dbReference>
<dbReference type="SMR" id="P69656"/>
<dbReference type="GeneID" id="800448"/>
<dbReference type="KEGG" id="nta:800448"/>
<dbReference type="OMA" id="TAVDQGM"/>
<dbReference type="OrthoDB" id="1286874at2759"/>
<dbReference type="Proteomes" id="UP000084051">
    <property type="component" value="Unplaced"/>
</dbReference>
<dbReference type="GO" id="GO:0009507">
    <property type="term" value="C:chloroplast"/>
    <property type="evidence" value="ECO:0007669"/>
    <property type="project" value="UniProtKB-SubCell"/>
</dbReference>
<dbReference type="GO" id="GO:1990904">
    <property type="term" value="C:ribonucleoprotein complex"/>
    <property type="evidence" value="ECO:0007669"/>
    <property type="project" value="UniProtKB-KW"/>
</dbReference>
<dbReference type="GO" id="GO:0005840">
    <property type="term" value="C:ribosome"/>
    <property type="evidence" value="ECO:0007669"/>
    <property type="project" value="UniProtKB-KW"/>
</dbReference>
<dbReference type="GO" id="GO:0019843">
    <property type="term" value="F:rRNA binding"/>
    <property type="evidence" value="ECO:0007669"/>
    <property type="project" value="UniProtKB-UniRule"/>
</dbReference>
<dbReference type="GO" id="GO:0003735">
    <property type="term" value="F:structural constituent of ribosome"/>
    <property type="evidence" value="ECO:0007669"/>
    <property type="project" value="InterPro"/>
</dbReference>
<dbReference type="GO" id="GO:0006412">
    <property type="term" value="P:translation"/>
    <property type="evidence" value="ECO:0007669"/>
    <property type="project" value="UniProtKB-UniRule"/>
</dbReference>
<dbReference type="FunFam" id="3.30.420.80:FF:000003">
    <property type="entry name" value="30S ribosomal protein S11, chloroplastic"/>
    <property type="match status" value="1"/>
</dbReference>
<dbReference type="Gene3D" id="3.30.420.80">
    <property type="entry name" value="Ribosomal protein S11"/>
    <property type="match status" value="1"/>
</dbReference>
<dbReference type="HAMAP" id="MF_01310">
    <property type="entry name" value="Ribosomal_uS11"/>
    <property type="match status" value="1"/>
</dbReference>
<dbReference type="InterPro" id="IPR001971">
    <property type="entry name" value="Ribosomal_uS11"/>
</dbReference>
<dbReference type="InterPro" id="IPR019981">
    <property type="entry name" value="Ribosomal_uS11_bac-type"/>
</dbReference>
<dbReference type="InterPro" id="IPR018102">
    <property type="entry name" value="Ribosomal_uS11_CS"/>
</dbReference>
<dbReference type="InterPro" id="IPR036967">
    <property type="entry name" value="Ribosomal_uS11_sf"/>
</dbReference>
<dbReference type="NCBIfam" id="NF003698">
    <property type="entry name" value="PRK05309.1"/>
    <property type="match status" value="1"/>
</dbReference>
<dbReference type="NCBIfam" id="TIGR03632">
    <property type="entry name" value="uS11_bact"/>
    <property type="match status" value="1"/>
</dbReference>
<dbReference type="PANTHER" id="PTHR11759">
    <property type="entry name" value="40S RIBOSOMAL PROTEIN S14/30S RIBOSOMAL PROTEIN S11"/>
    <property type="match status" value="1"/>
</dbReference>
<dbReference type="Pfam" id="PF00411">
    <property type="entry name" value="Ribosomal_S11"/>
    <property type="match status" value="1"/>
</dbReference>
<dbReference type="PIRSF" id="PIRSF002131">
    <property type="entry name" value="Ribosomal_S11"/>
    <property type="match status" value="1"/>
</dbReference>
<dbReference type="SUPFAM" id="SSF53137">
    <property type="entry name" value="Translational machinery components"/>
    <property type="match status" value="1"/>
</dbReference>
<dbReference type="PROSITE" id="PS00054">
    <property type="entry name" value="RIBOSOMAL_S11"/>
    <property type="match status" value="1"/>
</dbReference>
<name>RR11_TOBAC</name>
<reference key="1">
    <citation type="journal article" date="1986" name="EMBO J.">
        <title>The complete nucleotide sequence of the tobacco chloroplast genome: its gene organization and expression.</title>
        <authorList>
            <person name="Shinozaki K."/>
            <person name="Ohme M."/>
            <person name="Tanaka M."/>
            <person name="Wakasugi T."/>
            <person name="Hayashida N."/>
            <person name="Matsubayashi T."/>
            <person name="Zaita N."/>
            <person name="Chunwongse J."/>
            <person name="Obokata J."/>
            <person name="Yamaguchi-Shinozaki K."/>
            <person name="Ohto C."/>
            <person name="Torazawa K."/>
            <person name="Meng B.-Y."/>
            <person name="Sugita M."/>
            <person name="Deno H."/>
            <person name="Kamogashira T."/>
            <person name="Yamada K."/>
            <person name="Kusuda J."/>
            <person name="Takaiwa F."/>
            <person name="Kato A."/>
            <person name="Tohdoh N."/>
            <person name="Shimada H."/>
            <person name="Sugiura M."/>
        </authorList>
    </citation>
    <scope>NUCLEOTIDE SEQUENCE [LARGE SCALE GENOMIC DNA]</scope>
    <source>
        <strain>cv. Bright Yellow 4</strain>
    </source>
</reference>
<organism>
    <name type="scientific">Nicotiana tabacum</name>
    <name type="common">Common tobacco</name>
    <dbReference type="NCBI Taxonomy" id="4097"/>
    <lineage>
        <taxon>Eukaryota</taxon>
        <taxon>Viridiplantae</taxon>
        <taxon>Streptophyta</taxon>
        <taxon>Embryophyta</taxon>
        <taxon>Tracheophyta</taxon>
        <taxon>Spermatophyta</taxon>
        <taxon>Magnoliopsida</taxon>
        <taxon>eudicotyledons</taxon>
        <taxon>Gunneridae</taxon>
        <taxon>Pentapetalae</taxon>
        <taxon>asterids</taxon>
        <taxon>lamiids</taxon>
        <taxon>Solanales</taxon>
        <taxon>Solanaceae</taxon>
        <taxon>Nicotianoideae</taxon>
        <taxon>Nicotianeae</taxon>
        <taxon>Nicotiana</taxon>
    </lineage>
</organism>
<protein>
    <recommendedName>
        <fullName evidence="1">Small ribosomal subunit protein uS11c</fullName>
    </recommendedName>
    <alternativeName>
        <fullName evidence="3">30S ribosomal protein S11, chloroplastic</fullName>
    </alternativeName>
</protein>